<comment type="similarity">
    <text evidence="2">To E.coli YjbG.</text>
</comment>
<comment type="caution">
    <text evidence="2">In E.coli K12 / MG1655 and K12 / W3110 this operon is silenced by an IS1D insertion in the promoter region.</text>
</comment>
<accession>P75883</accession>
<accession>Q9Z3A3</accession>
<keyword id="KW-1185">Reference proteome</keyword>
<keyword id="KW-0732">Signal</keyword>
<reference key="1">
    <citation type="journal article" date="1996" name="DNA Res.">
        <title>A 718-kb DNA sequence of the Escherichia coli K-12 genome corresponding to the 12.7-28.0 min region on the linkage map.</title>
        <authorList>
            <person name="Oshima T."/>
            <person name="Aiba H."/>
            <person name="Baba T."/>
            <person name="Fujita K."/>
            <person name="Hayashi K."/>
            <person name="Honjo A."/>
            <person name="Ikemoto K."/>
            <person name="Inada T."/>
            <person name="Itoh T."/>
            <person name="Kajihara M."/>
            <person name="Kanai K."/>
            <person name="Kashimoto K."/>
            <person name="Kimura S."/>
            <person name="Kitagawa M."/>
            <person name="Makino K."/>
            <person name="Masuda S."/>
            <person name="Miki T."/>
            <person name="Mizobuchi K."/>
            <person name="Mori H."/>
            <person name="Motomura K."/>
            <person name="Nakamura Y."/>
            <person name="Nashimoto H."/>
            <person name="Nishio Y."/>
            <person name="Saito N."/>
            <person name="Sampei G."/>
            <person name="Seki Y."/>
            <person name="Tagami H."/>
            <person name="Takemoto K."/>
            <person name="Wada C."/>
            <person name="Yamamoto Y."/>
            <person name="Yano M."/>
            <person name="Horiuchi T."/>
        </authorList>
    </citation>
    <scope>NUCLEOTIDE SEQUENCE [LARGE SCALE GENOMIC DNA]</scope>
    <source>
        <strain>K12 / W3110 / ATCC 27325 / DSM 5911</strain>
    </source>
</reference>
<reference key="2">
    <citation type="journal article" date="1997" name="Science">
        <title>The complete genome sequence of Escherichia coli K-12.</title>
        <authorList>
            <person name="Blattner F.R."/>
            <person name="Plunkett G. III"/>
            <person name="Bloch C.A."/>
            <person name="Perna N.T."/>
            <person name="Burland V."/>
            <person name="Riley M."/>
            <person name="Collado-Vides J."/>
            <person name="Glasner J.D."/>
            <person name="Rode C.K."/>
            <person name="Mayhew G.F."/>
            <person name="Gregor J."/>
            <person name="Davis N.W."/>
            <person name="Kirkpatrick H.A."/>
            <person name="Goeden M.A."/>
            <person name="Rose D.J."/>
            <person name="Mau B."/>
            <person name="Shao Y."/>
        </authorList>
    </citation>
    <scope>NUCLEOTIDE SEQUENCE [LARGE SCALE GENOMIC DNA]</scope>
    <source>
        <strain>K12 / MG1655 / ATCC 47076</strain>
    </source>
</reference>
<reference key="3">
    <citation type="journal article" date="2006" name="Mol. Syst. Biol.">
        <title>Highly accurate genome sequences of Escherichia coli K-12 strains MG1655 and W3110.</title>
        <authorList>
            <person name="Hayashi K."/>
            <person name="Morooka N."/>
            <person name="Yamamoto Y."/>
            <person name="Fujita K."/>
            <person name="Isono K."/>
            <person name="Choi S."/>
            <person name="Ohtsubo E."/>
            <person name="Baba T."/>
            <person name="Wanner B.L."/>
            <person name="Mori H."/>
            <person name="Horiuchi T."/>
        </authorList>
    </citation>
    <scope>NUCLEOTIDE SEQUENCE [LARGE SCALE GENOMIC DNA]</scope>
    <source>
        <strain>K12 / W3110 / ATCC 27325 / DSM 5911</strain>
    </source>
</reference>
<evidence type="ECO:0000255" key="1"/>
<evidence type="ECO:0000305" key="2"/>
<protein>
    <recommendedName>
        <fullName>Uncharacterized protein GfcC</fullName>
    </recommendedName>
    <alternativeName>
        <fullName>Group 4 capsule protein C homolog</fullName>
    </alternativeName>
</protein>
<organism>
    <name type="scientific">Escherichia coli (strain K12)</name>
    <dbReference type="NCBI Taxonomy" id="83333"/>
    <lineage>
        <taxon>Bacteria</taxon>
        <taxon>Pseudomonadati</taxon>
        <taxon>Pseudomonadota</taxon>
        <taxon>Gammaproteobacteria</taxon>
        <taxon>Enterobacterales</taxon>
        <taxon>Enterobacteriaceae</taxon>
        <taxon>Escherichia</taxon>
    </lineage>
</organism>
<sequence length="248" mass="27296">MNKLQSYFIASVLYVMTPHAFAQGTVTIYLPGEQQTLSVGPVENVVQLVTQPQLRDRLWWPGALLTDSAAKAKALKDYQHVMAQLASWEAEADDDVAATIKSVRQQLLNLNITGRLPVKLDPDFVRVDENSNPPLVGDYTLYTVQRPVTITLLGAVSGAGQLPWQAGRSVTDYLQDHPRLAGADKNNVMVITPEGETVVAPVALWNKRHVEPPPGSQLWLGFSAHVLPEKYADLNDQIVSVLTQRVPD</sequence>
<name>GFCC_ECOLI</name>
<dbReference type="EMBL" id="U00096">
    <property type="protein sequence ID" value="AAC74070.1"/>
    <property type="molecule type" value="Genomic_DNA"/>
</dbReference>
<dbReference type="EMBL" id="AP009048">
    <property type="protein sequence ID" value="BAA35750.2"/>
    <property type="molecule type" value="Genomic_DNA"/>
</dbReference>
<dbReference type="PIR" id="G64839">
    <property type="entry name" value="G64839"/>
</dbReference>
<dbReference type="RefSeq" id="NP_415505.1">
    <property type="nucleotide sequence ID" value="NC_000913.3"/>
</dbReference>
<dbReference type="RefSeq" id="WP_001038079.1">
    <property type="nucleotide sequence ID" value="NZ_STEB01000006.1"/>
</dbReference>
<dbReference type="SMR" id="P75883"/>
<dbReference type="BioGRID" id="4261410">
    <property type="interactions" value="21"/>
</dbReference>
<dbReference type="BioGRID" id="849375">
    <property type="interactions" value="3"/>
</dbReference>
<dbReference type="DIP" id="DIP-12708N"/>
<dbReference type="FunCoup" id="P75883">
    <property type="interactions" value="53"/>
</dbReference>
<dbReference type="IntAct" id="P75883">
    <property type="interactions" value="5"/>
</dbReference>
<dbReference type="STRING" id="511145.b0985"/>
<dbReference type="PaxDb" id="511145-b0985"/>
<dbReference type="EnsemblBacteria" id="AAC74070">
    <property type="protein sequence ID" value="AAC74070"/>
    <property type="gene ID" value="b0985"/>
</dbReference>
<dbReference type="GeneID" id="944978"/>
<dbReference type="KEGG" id="ecj:JW0968"/>
<dbReference type="KEGG" id="eco:b0985"/>
<dbReference type="KEGG" id="ecoc:C3026_06005"/>
<dbReference type="PATRIC" id="fig|511145.12.peg.1020"/>
<dbReference type="EchoBASE" id="EB3494"/>
<dbReference type="eggNOG" id="ENOG5030EE4">
    <property type="taxonomic scope" value="Bacteria"/>
</dbReference>
<dbReference type="HOGENOM" id="CLU_080984_2_0_6"/>
<dbReference type="InParanoid" id="P75883"/>
<dbReference type="OMA" id="TWWPGTA"/>
<dbReference type="OrthoDB" id="5592890at2"/>
<dbReference type="PhylomeDB" id="P75883"/>
<dbReference type="BioCyc" id="EcoCyc:G6506-MONOMER"/>
<dbReference type="PRO" id="PR:P75883"/>
<dbReference type="Proteomes" id="UP000000625">
    <property type="component" value="Chromosome"/>
</dbReference>
<dbReference type="Gene3D" id="3.10.20.700">
    <property type="match status" value="2"/>
</dbReference>
<dbReference type="Gene3D" id="6.10.250.2280">
    <property type="match status" value="1"/>
</dbReference>
<dbReference type="Gene3D" id="3.10.560.10">
    <property type="entry name" value="Outer membrane lipoprotein wza domain like"/>
    <property type="match status" value="1"/>
</dbReference>
<dbReference type="InterPro" id="IPR046459">
    <property type="entry name" value="Caps_syn_GfcC_N"/>
</dbReference>
<dbReference type="InterPro" id="IPR010425">
    <property type="entry name" value="Caps_synth_GfcC-like_C"/>
</dbReference>
<dbReference type="Pfam" id="PF06251">
    <property type="entry name" value="Caps_syn_GfcC_C"/>
    <property type="match status" value="1"/>
</dbReference>
<dbReference type="Pfam" id="PF20616">
    <property type="entry name" value="Caps_syn_GfcC_N"/>
    <property type="match status" value="1"/>
</dbReference>
<feature type="signal peptide" evidence="1">
    <location>
        <begin position="1"/>
        <end position="22"/>
    </location>
</feature>
<feature type="chain" id="PRO_0000013816" description="Uncharacterized protein GfcC">
    <location>
        <begin position="23"/>
        <end position="248"/>
    </location>
</feature>
<gene>
    <name type="primary">gfcC</name>
    <name type="synonym">ymcB</name>
    <name type="ordered locus">b0985</name>
    <name type="ordered locus">JW0968</name>
</gene>
<proteinExistence type="inferred from homology"/>